<gene>
    <name evidence="1" type="primary">ccs1</name>
    <name type="ordered locus">Grc000027</name>
</gene>
<reference key="1">
    <citation type="journal article" date="2004" name="J. Mol. Evol.">
        <title>Comparative analysis of the complete plastid genome sequence of the red alga Gracilaria tenuistipitata var. liui provides insights into the evolution of rhodoplasts and their relationship to other plastids.</title>
        <authorList>
            <person name="Hagopian J.C."/>
            <person name="Reis M."/>
            <person name="Kitajima J.P."/>
            <person name="Bhattacharya D."/>
            <person name="de Oliveira M.C."/>
        </authorList>
    </citation>
    <scope>NUCLEOTIDE SEQUENCE [LARGE SCALE GENOMIC DNA]</scope>
</reference>
<proteinExistence type="inferred from homology"/>
<organism>
    <name type="scientific">Gracilaria tenuistipitata var. liui</name>
    <name type="common">Red alga</name>
    <dbReference type="NCBI Taxonomy" id="285951"/>
    <lineage>
        <taxon>Eukaryota</taxon>
        <taxon>Rhodophyta</taxon>
        <taxon>Florideophyceae</taxon>
        <taxon>Rhodymeniophycidae</taxon>
        <taxon>Gracilariales</taxon>
        <taxon>Gracilariaceae</taxon>
        <taxon>Gracilaria</taxon>
        <taxon>Gracilaria tenuistipitata</taxon>
    </lineage>
</organism>
<evidence type="ECO:0000255" key="1">
    <source>
        <dbReference type="HAMAP-Rule" id="MF_01392"/>
    </source>
</evidence>
<sequence length="435" mass="50026">MNIKNILWFTLKKLSNLSLSISLLLLIASISIIGTIIEQNQSIVYYQMNYPINNQPFGRIMNWKIILNLGLDHIYLNPCFVLVLVLFFCSLLACTFSNQLPSLRNARKWKFLQYKNHINCNNHFVELDKISICNIIYSLYSNNYYIFHKENNIYAYKGLSGRIAPIVVHFSIILTFIGSLISLLGGFTAQEIIPTGEIFHIKNIIQSGFNSEIPNNITGKIKDFDIKYGPDNSVEQFVSKIIIYNNQGKNINQKQVSVNSPLILKGITFYQTDWKIDTLRFKIGNSKIIQQPIIKYKINNQILWSCRLPLNKEKYIFLVIANLNDKISIYDISNNLLTSIKLDETIVVNNTTLKIVEIMTKTGIQVKTDPGIIVTYTGFFILMLSIVISYISYSQIWVTSIIQNIKIAGSTNRATLTFEEEIINIQEIYTQYTWS</sequence>
<name>CCS1_GRATL</name>
<feature type="chain" id="PRO_0000363643" description="Cytochrome c biogenesis protein Ccs1">
    <location>
        <begin position="1"/>
        <end position="435"/>
    </location>
</feature>
<feature type="transmembrane region" description="Helical" evidence="1">
    <location>
        <begin position="17"/>
        <end position="37"/>
    </location>
</feature>
<feature type="transmembrane region" description="Helical" evidence="1">
    <location>
        <begin position="77"/>
        <end position="97"/>
    </location>
</feature>
<feature type="transmembrane region" description="Helical" evidence="1">
    <location>
        <begin position="163"/>
        <end position="183"/>
    </location>
</feature>
<comment type="function">
    <text evidence="1">Required during biogenesis of c-type cytochromes (cytochrome c6 and cytochrome f) at the step of heme attachment.</text>
</comment>
<comment type="subunit">
    <text evidence="1">May interact with CcsA.</text>
</comment>
<comment type="subcellular location">
    <subcellularLocation>
        <location evidence="1">Plastid</location>
        <location evidence="1">Chloroplast thylakoid membrane</location>
        <topology evidence="1">Multi-pass membrane protein</topology>
    </subcellularLocation>
</comment>
<comment type="similarity">
    <text evidence="1">Belongs to the Ccs1/CcsB family.</text>
</comment>
<dbReference type="EMBL" id="AY673996">
    <property type="protein sequence ID" value="AAT79609.1"/>
    <property type="molecule type" value="Genomic_DNA"/>
</dbReference>
<dbReference type="RefSeq" id="YP_063534.1">
    <property type="nucleotide sequence ID" value="NC_006137.1"/>
</dbReference>
<dbReference type="GeneID" id="2943985"/>
<dbReference type="GO" id="GO:0009535">
    <property type="term" value="C:chloroplast thylakoid membrane"/>
    <property type="evidence" value="ECO:0007669"/>
    <property type="project" value="UniProtKB-SubCell"/>
</dbReference>
<dbReference type="GO" id="GO:0017004">
    <property type="term" value="P:cytochrome complex assembly"/>
    <property type="evidence" value="ECO:0007669"/>
    <property type="project" value="UniProtKB-UniRule"/>
</dbReference>
<dbReference type="HAMAP" id="MF_01392">
    <property type="entry name" value="CytC_Ccs1"/>
    <property type="match status" value="1"/>
</dbReference>
<dbReference type="InterPro" id="IPR023494">
    <property type="entry name" value="Cyt_c_bgen_Ccs1/CcsB/ResB"/>
</dbReference>
<dbReference type="InterPro" id="IPR007816">
    <property type="entry name" value="ResB-like_domain"/>
</dbReference>
<dbReference type="PANTHER" id="PTHR31566">
    <property type="entry name" value="CYTOCHROME C BIOGENESIS PROTEIN CCS1, CHLOROPLASTIC"/>
    <property type="match status" value="1"/>
</dbReference>
<dbReference type="PANTHER" id="PTHR31566:SF0">
    <property type="entry name" value="CYTOCHROME C BIOGENESIS PROTEIN CCS1, CHLOROPLASTIC"/>
    <property type="match status" value="1"/>
</dbReference>
<dbReference type="Pfam" id="PF05140">
    <property type="entry name" value="ResB"/>
    <property type="match status" value="2"/>
</dbReference>
<geneLocation type="chloroplast"/>
<keyword id="KW-0150">Chloroplast</keyword>
<keyword id="KW-0201">Cytochrome c-type biogenesis</keyword>
<keyword id="KW-0472">Membrane</keyword>
<keyword id="KW-0934">Plastid</keyword>
<keyword id="KW-0793">Thylakoid</keyword>
<keyword id="KW-0812">Transmembrane</keyword>
<keyword id="KW-1133">Transmembrane helix</keyword>
<protein>
    <recommendedName>
        <fullName evidence="1">Cytochrome c biogenesis protein Ccs1</fullName>
    </recommendedName>
</protein>
<accession>Q6B926</accession>